<keyword id="KW-0539">Nucleus</keyword>
<keyword id="KW-1185">Reference proteome</keyword>
<keyword id="KW-0678">Repressor</keyword>
<keyword id="KW-0804">Transcription</keyword>
<keyword id="KW-0805">Transcription regulation</keyword>
<name>OFP8_ARATH</name>
<gene>
    <name type="primary">OFP8</name>
    <name type="ordered locus">At5g19650</name>
    <name type="ORF">T29J13</name>
</gene>
<comment type="function">
    <text evidence="4">Transcriptional repressor that regulates multiple aspects of plant growth and development through the regulation of BEL1-LIKE (BLH) and KNOX TALE (KNAT) homeodomain transcription factors.</text>
</comment>
<comment type="interaction">
    <interactant intactId="EBI-1999467">
        <id>Q3E9B4</id>
    </interactant>
    <interactant intactId="EBI-15191973">
        <id>C0SUU6</id>
        <label>At1g11510</label>
    </interactant>
    <organismsDiffer>false</organismsDiffer>
    <experiments>4</experiments>
</comment>
<comment type="subcellular location">
    <subcellularLocation>
        <location evidence="1">Nucleus</location>
    </subcellularLocation>
</comment>
<comment type="tissue specificity">
    <text evidence="4">Expressed in roots, rosette and cauline leaves, shoots, stems, flower buds and siliques.</text>
</comment>
<comment type="disruption phenotype">
    <text evidence="4">No visible phenotype under normal growth conditions.</text>
</comment>
<comment type="miscellaneous">
    <text evidence="5">Plants over-expressing OFP8 show flat, thick and cyan leaves, and enhanced apical dormancy.</text>
</comment>
<sequence length="221" mass="25466">MEKRMKLRVSRIVRSSLSSCRPRDLYDVVETCAVTSKATSSERFFVTKAKTKTPSRPKSHASSCPRASPIFPPNPFYEESRSFRDLRKKVKTNRKQRSQFGSDPLFASRFKSTGSWYWSCSEEEDEGDKEESEDDDSDTLFSSRSFSSDSSKAESFAVVKKSKDPYEDFRTSMVEMIVERQIFAPAELQQLLQCFLSLNSRQHHKVIVQVFLEIYATLFSP</sequence>
<feature type="chain" id="PRO_0000429677" description="Transcription repressor OFP8">
    <location>
        <begin position="1"/>
        <end position="221"/>
    </location>
</feature>
<feature type="domain" description="OVATE" evidence="2">
    <location>
        <begin position="158"/>
        <end position="217"/>
    </location>
</feature>
<feature type="region of interest" description="Disordered" evidence="3">
    <location>
        <begin position="124"/>
        <end position="147"/>
    </location>
</feature>
<feature type="compositionally biased region" description="Acidic residues" evidence="3">
    <location>
        <begin position="124"/>
        <end position="138"/>
    </location>
</feature>
<dbReference type="EMBL" id="AF296838">
    <property type="status" value="NOT_ANNOTATED_CDS"/>
    <property type="molecule type" value="Genomic_DNA"/>
</dbReference>
<dbReference type="EMBL" id="CP002688">
    <property type="protein sequence ID" value="AED92734.1"/>
    <property type="molecule type" value="Genomic_DNA"/>
</dbReference>
<dbReference type="RefSeq" id="NP_197466.1">
    <property type="nucleotide sequence ID" value="NM_121970.2"/>
</dbReference>
<dbReference type="BioGRID" id="17361">
    <property type="interactions" value="8"/>
</dbReference>
<dbReference type="IntAct" id="Q3E9B4">
    <property type="interactions" value="8"/>
</dbReference>
<dbReference type="STRING" id="3702.Q3E9B4"/>
<dbReference type="PaxDb" id="3702-AT5G19650.1"/>
<dbReference type="EnsemblPlants" id="AT5G19650.1">
    <property type="protein sequence ID" value="AT5G19650.1"/>
    <property type="gene ID" value="AT5G19650"/>
</dbReference>
<dbReference type="GeneID" id="832085"/>
<dbReference type="Gramene" id="AT5G19650.1">
    <property type="protein sequence ID" value="AT5G19650.1"/>
    <property type="gene ID" value="AT5G19650"/>
</dbReference>
<dbReference type="KEGG" id="ath:AT5G19650"/>
<dbReference type="Araport" id="AT5G19650"/>
<dbReference type="TAIR" id="AT5G19650">
    <property type="gene designation" value="OFP8"/>
</dbReference>
<dbReference type="eggNOG" id="ENOG502QSY1">
    <property type="taxonomic scope" value="Eukaryota"/>
</dbReference>
<dbReference type="HOGENOM" id="CLU_1333580_0_0_1"/>
<dbReference type="InParanoid" id="Q3E9B4"/>
<dbReference type="OMA" id="NRFRCME"/>
<dbReference type="PhylomeDB" id="Q3E9B4"/>
<dbReference type="PRO" id="PR:Q3E9B4"/>
<dbReference type="Proteomes" id="UP000006548">
    <property type="component" value="Chromosome 5"/>
</dbReference>
<dbReference type="ExpressionAtlas" id="Q3E9B4">
    <property type="expression patterns" value="baseline and differential"/>
</dbReference>
<dbReference type="GO" id="GO:0005634">
    <property type="term" value="C:nucleus"/>
    <property type="evidence" value="ECO:0007669"/>
    <property type="project" value="UniProtKB-SubCell"/>
</dbReference>
<dbReference type="GO" id="GO:0045892">
    <property type="term" value="P:negative regulation of DNA-templated transcription"/>
    <property type="evidence" value="ECO:0000314"/>
    <property type="project" value="TAIR"/>
</dbReference>
<dbReference type="InterPro" id="IPR038933">
    <property type="entry name" value="Ovate"/>
</dbReference>
<dbReference type="InterPro" id="IPR006458">
    <property type="entry name" value="Ovate_C"/>
</dbReference>
<dbReference type="NCBIfam" id="TIGR01568">
    <property type="entry name" value="A_thal_3678"/>
    <property type="match status" value="1"/>
</dbReference>
<dbReference type="PANTHER" id="PTHR33057">
    <property type="entry name" value="TRANSCRIPTION REPRESSOR OFP7-RELATED"/>
    <property type="match status" value="1"/>
</dbReference>
<dbReference type="PANTHER" id="PTHR33057:SF17">
    <property type="entry name" value="TRANSCRIPTION REPRESSOR OFP8"/>
    <property type="match status" value="1"/>
</dbReference>
<dbReference type="Pfam" id="PF04844">
    <property type="entry name" value="Ovate"/>
    <property type="match status" value="1"/>
</dbReference>
<dbReference type="PROSITE" id="PS51754">
    <property type="entry name" value="OVATE"/>
    <property type="match status" value="1"/>
</dbReference>
<accession>Q3E9B4</accession>
<reference key="1">
    <citation type="journal article" date="2000" name="Nature">
        <title>Sequence and analysis of chromosome 5 of the plant Arabidopsis thaliana.</title>
        <authorList>
            <person name="Tabata S."/>
            <person name="Kaneko T."/>
            <person name="Nakamura Y."/>
            <person name="Kotani H."/>
            <person name="Kato T."/>
            <person name="Asamizu E."/>
            <person name="Miyajima N."/>
            <person name="Sasamoto S."/>
            <person name="Kimura T."/>
            <person name="Hosouchi T."/>
            <person name="Kawashima K."/>
            <person name="Kohara M."/>
            <person name="Matsumoto M."/>
            <person name="Matsuno A."/>
            <person name="Muraki A."/>
            <person name="Nakayama S."/>
            <person name="Nakazaki N."/>
            <person name="Naruo K."/>
            <person name="Okumura S."/>
            <person name="Shinpo S."/>
            <person name="Takeuchi C."/>
            <person name="Wada T."/>
            <person name="Watanabe A."/>
            <person name="Yamada M."/>
            <person name="Yasuda M."/>
            <person name="Sato S."/>
            <person name="de la Bastide M."/>
            <person name="Huang E."/>
            <person name="Spiegel L."/>
            <person name="Gnoj L."/>
            <person name="O'Shaughnessy A."/>
            <person name="Preston R."/>
            <person name="Habermann K."/>
            <person name="Murray J."/>
            <person name="Johnson D."/>
            <person name="Rohlfing T."/>
            <person name="Nelson J."/>
            <person name="Stoneking T."/>
            <person name="Pepin K."/>
            <person name="Spieth J."/>
            <person name="Sekhon M."/>
            <person name="Armstrong J."/>
            <person name="Becker M."/>
            <person name="Belter E."/>
            <person name="Cordum H."/>
            <person name="Cordes M."/>
            <person name="Courtney L."/>
            <person name="Courtney W."/>
            <person name="Dante M."/>
            <person name="Du H."/>
            <person name="Edwards J."/>
            <person name="Fryman J."/>
            <person name="Haakensen B."/>
            <person name="Lamar E."/>
            <person name="Latreille P."/>
            <person name="Leonard S."/>
            <person name="Meyer R."/>
            <person name="Mulvaney E."/>
            <person name="Ozersky P."/>
            <person name="Riley A."/>
            <person name="Strowmatt C."/>
            <person name="Wagner-McPherson C."/>
            <person name="Wollam A."/>
            <person name="Yoakum M."/>
            <person name="Bell M."/>
            <person name="Dedhia N."/>
            <person name="Parnell L."/>
            <person name="Shah R."/>
            <person name="Rodriguez M."/>
            <person name="Hoon See L."/>
            <person name="Vil D."/>
            <person name="Baker J."/>
            <person name="Kirchoff K."/>
            <person name="Toth K."/>
            <person name="King L."/>
            <person name="Bahret A."/>
            <person name="Miller B."/>
            <person name="Marra M.A."/>
            <person name="Martienssen R."/>
            <person name="McCombie W.R."/>
            <person name="Wilson R.K."/>
            <person name="Murphy G."/>
            <person name="Bancroft I."/>
            <person name="Volckaert G."/>
            <person name="Wambutt R."/>
            <person name="Duesterhoeft A."/>
            <person name="Stiekema W."/>
            <person name="Pohl T."/>
            <person name="Entian K.-D."/>
            <person name="Terryn N."/>
            <person name="Hartley N."/>
            <person name="Bent E."/>
            <person name="Johnson S."/>
            <person name="Langham S.-A."/>
            <person name="McCullagh B."/>
            <person name="Robben J."/>
            <person name="Grymonprez B."/>
            <person name="Zimmermann W."/>
            <person name="Ramsperger U."/>
            <person name="Wedler H."/>
            <person name="Balke K."/>
            <person name="Wedler E."/>
            <person name="Peters S."/>
            <person name="van Staveren M."/>
            <person name="Dirkse W."/>
            <person name="Mooijman P."/>
            <person name="Klein Lankhorst R."/>
            <person name="Weitzenegger T."/>
            <person name="Bothe G."/>
            <person name="Rose M."/>
            <person name="Hauf J."/>
            <person name="Berneiser S."/>
            <person name="Hempel S."/>
            <person name="Feldpausch M."/>
            <person name="Lamberth S."/>
            <person name="Villarroel R."/>
            <person name="Gielen J."/>
            <person name="Ardiles W."/>
            <person name="Bents O."/>
            <person name="Lemcke K."/>
            <person name="Kolesov G."/>
            <person name="Mayer K.F.X."/>
            <person name="Rudd S."/>
            <person name="Schoof H."/>
            <person name="Schueller C."/>
            <person name="Zaccaria P."/>
            <person name="Mewes H.-W."/>
            <person name="Bevan M."/>
            <person name="Fransz P.F."/>
        </authorList>
    </citation>
    <scope>NUCLEOTIDE SEQUENCE [LARGE SCALE GENOMIC DNA]</scope>
    <source>
        <strain>cv. Columbia</strain>
    </source>
</reference>
<reference key="2">
    <citation type="journal article" date="2017" name="Plant J.">
        <title>Araport11: a complete reannotation of the Arabidopsis thaliana reference genome.</title>
        <authorList>
            <person name="Cheng C.Y."/>
            <person name="Krishnakumar V."/>
            <person name="Chan A.P."/>
            <person name="Thibaud-Nissen F."/>
            <person name="Schobel S."/>
            <person name="Town C.D."/>
        </authorList>
    </citation>
    <scope>GENOME REANNOTATION</scope>
    <source>
        <strain>cv. Columbia</strain>
    </source>
</reference>
<reference key="3">
    <citation type="journal article" date="2011" name="PLoS ONE">
        <title>Arabidopsis ovate family proteins, a novel transcriptional repressor family, control multiple aspects of plant growth and development.</title>
        <authorList>
            <person name="Wang S."/>
            <person name="Chang Y."/>
            <person name="Guo J."/>
            <person name="Zeng Q."/>
            <person name="Ellis B.E."/>
            <person name="Chen J.G."/>
        </authorList>
    </citation>
    <scope>FUNCTION</scope>
    <scope>TISSUE SPECIFICITY</scope>
    <scope>GENE FAMILY</scope>
    <scope>DISRUPTION PHENOTYPE</scope>
</reference>
<protein>
    <recommendedName>
        <fullName>Transcription repressor OFP8</fullName>
    </recommendedName>
    <alternativeName>
        <fullName>Ovate family protein 8</fullName>
        <shortName>AtOFP8</shortName>
    </alternativeName>
</protein>
<proteinExistence type="evidence at protein level"/>
<organism>
    <name type="scientific">Arabidopsis thaliana</name>
    <name type="common">Mouse-ear cress</name>
    <dbReference type="NCBI Taxonomy" id="3702"/>
    <lineage>
        <taxon>Eukaryota</taxon>
        <taxon>Viridiplantae</taxon>
        <taxon>Streptophyta</taxon>
        <taxon>Embryophyta</taxon>
        <taxon>Tracheophyta</taxon>
        <taxon>Spermatophyta</taxon>
        <taxon>Magnoliopsida</taxon>
        <taxon>eudicotyledons</taxon>
        <taxon>Gunneridae</taxon>
        <taxon>Pentapetalae</taxon>
        <taxon>rosids</taxon>
        <taxon>malvids</taxon>
        <taxon>Brassicales</taxon>
        <taxon>Brassicaceae</taxon>
        <taxon>Camelineae</taxon>
        <taxon>Arabidopsis</taxon>
    </lineage>
</organism>
<evidence type="ECO:0000250" key="1"/>
<evidence type="ECO:0000255" key="2">
    <source>
        <dbReference type="PROSITE-ProRule" id="PRU01090"/>
    </source>
</evidence>
<evidence type="ECO:0000256" key="3">
    <source>
        <dbReference type="SAM" id="MobiDB-lite"/>
    </source>
</evidence>
<evidence type="ECO:0000269" key="4">
    <source>
    </source>
</evidence>
<evidence type="ECO:0000305" key="5">
    <source>
    </source>
</evidence>